<protein>
    <recommendedName>
        <fullName evidence="1">ATP synthase subunit b, chloroplastic</fullName>
    </recommendedName>
    <alternativeName>
        <fullName evidence="1">ATP synthase F(0) sector subunit b</fullName>
    </alternativeName>
    <alternativeName>
        <fullName evidence="1">ATPase subunit I</fullName>
    </alternativeName>
</protein>
<reference key="1">
    <citation type="journal article" date="2007" name="BMC Biol.">
        <title>A clade uniting the green algae Mesostigma viride and Chlorokybus atmophyticus represents the deepest branch of the Streptophyta in chloroplast genome-based phylogenies.</title>
        <authorList>
            <person name="Lemieux C."/>
            <person name="Otis C."/>
            <person name="Turmel M."/>
        </authorList>
    </citation>
    <scope>NUCLEOTIDE SEQUENCE [LARGE SCALE GENOMIC DNA]</scope>
    <source>
        <strain>SAG 48.80</strain>
    </source>
</reference>
<comment type="function">
    <text evidence="1">F(1)F(0) ATP synthase produces ATP from ADP in the presence of a proton or sodium gradient. F-type ATPases consist of two structural domains, F(1) containing the extramembraneous catalytic core and F(0) containing the membrane proton channel, linked together by a central stalk and a peripheral stalk. During catalysis, ATP synthesis in the catalytic domain of F(1) is coupled via a rotary mechanism of the central stalk subunits to proton translocation.</text>
</comment>
<comment type="function">
    <text evidence="1">Component of the F(0) channel, it forms part of the peripheral stalk, linking F(1) to F(0).</text>
</comment>
<comment type="subunit">
    <text evidence="1">F-type ATPases have 2 components, F(1) - the catalytic core - and F(0) - the membrane proton channel. F(1) has five subunits: alpha(3), beta(3), gamma(1), delta(1), epsilon(1). F(0) has four main subunits: a(1), b(1), b'(1) and c(10-14). The alpha and beta chains form an alternating ring which encloses part of the gamma chain. F(1) is attached to F(0) by a central stalk formed by the gamma and epsilon chains, while a peripheral stalk is formed by the delta, b and b' chains.</text>
</comment>
<comment type="subcellular location">
    <subcellularLocation>
        <location evidence="1">Plastid</location>
        <location evidence="1">Chloroplast thylakoid membrane</location>
        <topology evidence="1">Single-pass membrane protein</topology>
    </subcellularLocation>
</comment>
<comment type="miscellaneous">
    <text>In plastids the F-type ATPase is also known as CF(1)CF(0).</text>
</comment>
<comment type="similarity">
    <text evidence="1">Belongs to the ATPase B chain family.</text>
</comment>
<evidence type="ECO:0000255" key="1">
    <source>
        <dbReference type="HAMAP-Rule" id="MF_01398"/>
    </source>
</evidence>
<accession>Q19VA4</accession>
<name>ATPF_CHLAT</name>
<keyword id="KW-0066">ATP synthesis</keyword>
<keyword id="KW-0138">CF(0)</keyword>
<keyword id="KW-0150">Chloroplast</keyword>
<keyword id="KW-0375">Hydrogen ion transport</keyword>
<keyword id="KW-0406">Ion transport</keyword>
<keyword id="KW-0472">Membrane</keyword>
<keyword id="KW-0934">Plastid</keyword>
<keyword id="KW-0793">Thylakoid</keyword>
<keyword id="KW-0812">Transmembrane</keyword>
<keyword id="KW-1133">Transmembrane helix</keyword>
<keyword id="KW-0813">Transport</keyword>
<sequence length="187" mass="21372">MTDILTNMFTIVAELPLGEEEGFAFNGNILETNLINLAAVIGLLFYSGRSFLTNLLRNREDNILKSIRDADERYKEATEKLQQAKNEFEQAKIEADEIRAQSRITAKEIEVSLMGLVSEDTKRLIDMKQATISFEEEKAINEVRRQVIRLALQRALEQSKNRLNHRLQKRVTRLNIGLLGQLVGVND</sequence>
<organism>
    <name type="scientific">Chlorokybus atmophyticus</name>
    <name type="common">Soil alga</name>
    <dbReference type="NCBI Taxonomy" id="3144"/>
    <lineage>
        <taxon>Eukaryota</taxon>
        <taxon>Viridiplantae</taxon>
        <taxon>Streptophyta</taxon>
        <taxon>Chlorokybophyceae</taxon>
        <taxon>Chlorokybales</taxon>
        <taxon>Chlorokybaceae</taxon>
        <taxon>Chlorokybus</taxon>
    </lineage>
</organism>
<feature type="chain" id="PRO_0000368918" description="ATP synthase subunit b, chloroplastic">
    <location>
        <begin position="1"/>
        <end position="187"/>
    </location>
</feature>
<feature type="transmembrane region" description="Helical" evidence="1">
    <location>
        <begin position="34"/>
        <end position="56"/>
    </location>
</feature>
<proteinExistence type="inferred from homology"/>
<gene>
    <name evidence="1" type="primary">atpF</name>
</gene>
<geneLocation type="chloroplast"/>
<dbReference type="EMBL" id="DQ422812">
    <property type="protein sequence ID" value="ABD62172.2"/>
    <property type="molecule type" value="Genomic_DNA"/>
</dbReference>
<dbReference type="RefSeq" id="YP_001019098.1">
    <property type="nucleotide sequence ID" value="NC_008822.1"/>
</dbReference>
<dbReference type="SMR" id="Q19VA4"/>
<dbReference type="GeneID" id="4783258"/>
<dbReference type="GO" id="GO:0009535">
    <property type="term" value="C:chloroplast thylakoid membrane"/>
    <property type="evidence" value="ECO:0007669"/>
    <property type="project" value="UniProtKB-SubCell"/>
</dbReference>
<dbReference type="GO" id="GO:0045259">
    <property type="term" value="C:proton-transporting ATP synthase complex"/>
    <property type="evidence" value="ECO:0007669"/>
    <property type="project" value="UniProtKB-KW"/>
</dbReference>
<dbReference type="GO" id="GO:0046933">
    <property type="term" value="F:proton-transporting ATP synthase activity, rotational mechanism"/>
    <property type="evidence" value="ECO:0007669"/>
    <property type="project" value="UniProtKB-UniRule"/>
</dbReference>
<dbReference type="CDD" id="cd06503">
    <property type="entry name" value="ATP-synt_Fo_b"/>
    <property type="match status" value="1"/>
</dbReference>
<dbReference type="HAMAP" id="MF_01398">
    <property type="entry name" value="ATP_synth_b_bprime"/>
    <property type="match status" value="1"/>
</dbReference>
<dbReference type="InterPro" id="IPR002146">
    <property type="entry name" value="ATP_synth_b/b'su_bac/chlpt"/>
</dbReference>
<dbReference type="PANTHER" id="PTHR34264">
    <property type="entry name" value="ATP SYNTHASE SUBUNIT B, CHLOROPLASTIC"/>
    <property type="match status" value="1"/>
</dbReference>
<dbReference type="PANTHER" id="PTHR34264:SF3">
    <property type="entry name" value="ATP SYNTHASE SUBUNIT B, CHLOROPLASTIC"/>
    <property type="match status" value="1"/>
</dbReference>
<dbReference type="Pfam" id="PF00430">
    <property type="entry name" value="ATP-synt_B"/>
    <property type="match status" value="1"/>
</dbReference>